<reference key="1">
    <citation type="journal article" date="1998" name="Biochim. Biophys. Acta">
        <title>Stearoyl-CoA desaturase mRNA is transcribed from a single gene in the ovine genome.</title>
        <authorList>
            <person name="Ward R.J."/>
            <person name="Travers M.T."/>
            <person name="Richards S.E."/>
            <person name="Vernon R.G."/>
            <person name="Salter A.M."/>
            <person name="Buttery P.J."/>
            <person name="Barber M.C."/>
        </authorList>
    </citation>
    <scope>NUCLEOTIDE SEQUENCE [MRNA]</scope>
    <source>
        <strain>Y1089</strain>
        <tissue>Adipose tissue</tissue>
    </source>
</reference>
<proteinExistence type="evidence at transcript level"/>
<sequence>MPAHLLQEEISSSYTTTTTITAPPSRVLQNGGGKLEKTPLYLEEDIRPEMRDDIYDPNYQDKEGPKPKLEYVWRNIILMGLLHLGALYGITLIPTCKIYTFLWVLFYYVISALGITAGVHRLWSHRTYKARLPLRVFLIIANTMAFQNDVFEWSRDHRAHHKFSETDADPHNSRRGFFFSHVGWLLVRKHPAVREKGATLDLSDLRAEKLVMFQRRYYKPGVLLLCFILPTLVPWYLWGESFQNSLFFATFLRYAVVLNATWLVNSAAHMYGYRPYDKTINPRENILVSLGAVGEGFHNYHHTFPYDYSASEYRWHINFTTFFIDCMAAIGLAYDRKKVSKAAVLGRMKRTGEESYKSG</sequence>
<gene>
    <name type="primary">SCD</name>
</gene>
<keyword id="KW-0256">Endoplasmic reticulum</keyword>
<keyword id="KW-0275">Fatty acid biosynthesis</keyword>
<keyword id="KW-0276">Fatty acid metabolism</keyword>
<keyword id="KW-0408">Iron</keyword>
<keyword id="KW-0444">Lipid biosynthesis</keyword>
<keyword id="KW-0443">Lipid metabolism</keyword>
<keyword id="KW-0472">Membrane</keyword>
<keyword id="KW-0479">Metal-binding</keyword>
<keyword id="KW-0560">Oxidoreductase</keyword>
<keyword id="KW-0597">Phosphoprotein</keyword>
<keyword id="KW-1185">Reference proteome</keyword>
<keyword id="KW-0812">Transmembrane</keyword>
<keyword id="KW-1133">Transmembrane helix</keyword>
<dbReference type="EC" id="1.14.19.1" evidence="2"/>
<dbReference type="EMBL" id="AJ001048">
    <property type="protein sequence ID" value="CAA04502.1"/>
    <property type="molecule type" value="mRNA"/>
</dbReference>
<dbReference type="RefSeq" id="NP_001009254.1">
    <property type="nucleotide sequence ID" value="NM_001009254.1"/>
</dbReference>
<dbReference type="SMR" id="O62849"/>
<dbReference type="STRING" id="9940.ENSOARP00000015742"/>
<dbReference type="PaxDb" id="9940-ENSOARP00000015742"/>
<dbReference type="GeneID" id="443185"/>
<dbReference type="KEGG" id="oas:443185"/>
<dbReference type="CTD" id="6319"/>
<dbReference type="eggNOG" id="KOG1600">
    <property type="taxonomic scope" value="Eukaryota"/>
</dbReference>
<dbReference type="OrthoDB" id="10260134at2759"/>
<dbReference type="Proteomes" id="UP000002356">
    <property type="component" value="Unplaced"/>
</dbReference>
<dbReference type="GO" id="GO:0005789">
    <property type="term" value="C:endoplasmic reticulum membrane"/>
    <property type="evidence" value="ECO:0000250"/>
    <property type="project" value="UniProtKB"/>
</dbReference>
<dbReference type="GO" id="GO:0016020">
    <property type="term" value="C:membrane"/>
    <property type="evidence" value="ECO:0000250"/>
    <property type="project" value="UniProtKB"/>
</dbReference>
<dbReference type="GO" id="GO:0005506">
    <property type="term" value="F:iron ion binding"/>
    <property type="evidence" value="ECO:0000250"/>
    <property type="project" value="UniProtKB"/>
</dbReference>
<dbReference type="GO" id="GO:0016491">
    <property type="term" value="F:oxidoreductase activity"/>
    <property type="evidence" value="ECO:0000250"/>
    <property type="project" value="UniProtKB"/>
</dbReference>
<dbReference type="GO" id="GO:0032896">
    <property type="term" value="F:palmitoyl-CoA 9-desaturase activity"/>
    <property type="evidence" value="ECO:0007669"/>
    <property type="project" value="TreeGrafter"/>
</dbReference>
<dbReference type="GO" id="GO:0004768">
    <property type="term" value="F:stearoyl-CoA 9-desaturase activity"/>
    <property type="evidence" value="ECO:0000314"/>
    <property type="project" value="AgBase"/>
</dbReference>
<dbReference type="GO" id="GO:1903966">
    <property type="term" value="P:monounsaturated fatty acid biosynthetic process"/>
    <property type="evidence" value="ECO:0007669"/>
    <property type="project" value="TreeGrafter"/>
</dbReference>
<dbReference type="GO" id="GO:0070542">
    <property type="term" value="P:response to fatty acid"/>
    <property type="evidence" value="ECO:0007669"/>
    <property type="project" value="TreeGrafter"/>
</dbReference>
<dbReference type="GO" id="GO:0006636">
    <property type="term" value="P:unsaturated fatty acid biosynthetic process"/>
    <property type="evidence" value="ECO:0000250"/>
    <property type="project" value="UniProtKB"/>
</dbReference>
<dbReference type="CDD" id="cd03505">
    <property type="entry name" value="Delta9-FADS-like"/>
    <property type="match status" value="1"/>
</dbReference>
<dbReference type="InterPro" id="IPR015876">
    <property type="entry name" value="Acyl-CoA_DS"/>
</dbReference>
<dbReference type="InterPro" id="IPR001522">
    <property type="entry name" value="FADS-1_CS"/>
</dbReference>
<dbReference type="PANTHER" id="PTHR11351">
    <property type="entry name" value="ACYL-COA DESATURASE"/>
    <property type="match status" value="1"/>
</dbReference>
<dbReference type="PANTHER" id="PTHR11351:SF102">
    <property type="entry name" value="STEAROYL-COA DESATURASE"/>
    <property type="match status" value="1"/>
</dbReference>
<dbReference type="PRINTS" id="PR00075">
    <property type="entry name" value="FACDDSATRASE"/>
</dbReference>
<dbReference type="PROSITE" id="PS00476">
    <property type="entry name" value="FATTY_ACID_DESATUR_1"/>
    <property type="match status" value="1"/>
</dbReference>
<organism>
    <name type="scientific">Ovis aries</name>
    <name type="common">Sheep</name>
    <dbReference type="NCBI Taxonomy" id="9940"/>
    <lineage>
        <taxon>Eukaryota</taxon>
        <taxon>Metazoa</taxon>
        <taxon>Chordata</taxon>
        <taxon>Craniata</taxon>
        <taxon>Vertebrata</taxon>
        <taxon>Euteleostomi</taxon>
        <taxon>Mammalia</taxon>
        <taxon>Eutheria</taxon>
        <taxon>Laurasiatheria</taxon>
        <taxon>Artiodactyla</taxon>
        <taxon>Ruminantia</taxon>
        <taxon>Pecora</taxon>
        <taxon>Bovidae</taxon>
        <taxon>Caprinae</taxon>
        <taxon>Ovis</taxon>
    </lineage>
</organism>
<feature type="chain" id="PRO_0000185402" description="Acyl-CoA desaturase">
    <location>
        <begin position="1"/>
        <end position="359"/>
    </location>
</feature>
<feature type="topological domain" description="Cytoplasmic" evidence="1">
    <location>
        <begin position="1"/>
        <end position="72"/>
    </location>
</feature>
<feature type="transmembrane region" description="Helical" evidence="1">
    <location>
        <begin position="73"/>
        <end position="93"/>
    </location>
</feature>
<feature type="topological domain" description="Lumenal" evidence="1">
    <location>
        <begin position="94"/>
        <end position="97"/>
    </location>
</feature>
<feature type="transmembrane region" description="Helical" evidence="1">
    <location>
        <begin position="98"/>
        <end position="118"/>
    </location>
</feature>
<feature type="topological domain" description="Cytoplasmic" evidence="1">
    <location>
        <begin position="119"/>
        <end position="217"/>
    </location>
</feature>
<feature type="transmembrane region" description="Helical" evidence="1">
    <location>
        <begin position="218"/>
        <end position="237"/>
    </location>
</feature>
<feature type="topological domain" description="Lumenal" evidence="1">
    <location>
        <begin position="238"/>
        <end position="241"/>
    </location>
</feature>
<feature type="transmembrane region" description="Helical" evidence="1">
    <location>
        <begin position="242"/>
        <end position="263"/>
    </location>
</feature>
<feature type="topological domain" description="Cytoplasmic" evidence="1">
    <location>
        <begin position="264"/>
        <end position="359"/>
    </location>
</feature>
<feature type="short sequence motif" description="Histidine box-1" evidence="4">
    <location>
        <begin position="120"/>
        <end position="125"/>
    </location>
</feature>
<feature type="short sequence motif" description="Histidine box-2" evidence="4">
    <location>
        <begin position="157"/>
        <end position="161"/>
    </location>
</feature>
<feature type="short sequence motif" description="Histidine box-3" evidence="4">
    <location>
        <begin position="298"/>
        <end position="302"/>
    </location>
</feature>
<feature type="binding site" evidence="1">
    <location>
        <position position="75"/>
    </location>
    <ligand>
        <name>substrate</name>
    </ligand>
</feature>
<feature type="binding site" evidence="2">
    <location>
        <position position="120"/>
    </location>
    <ligand>
        <name>Fe cation</name>
        <dbReference type="ChEBI" id="CHEBI:24875"/>
        <label>1</label>
    </ligand>
</feature>
<feature type="binding site" evidence="2">
    <location>
        <position position="125"/>
    </location>
    <ligand>
        <name>Fe cation</name>
        <dbReference type="ChEBI" id="CHEBI:24875"/>
        <label>1</label>
    </ligand>
</feature>
<feature type="binding site" evidence="1">
    <location>
        <position position="148"/>
    </location>
    <ligand>
        <name>substrate</name>
    </ligand>
</feature>
<feature type="binding site" evidence="1">
    <location>
        <position position="155"/>
    </location>
    <ligand>
        <name>substrate</name>
    </ligand>
</feature>
<feature type="binding site" evidence="1">
    <location>
        <position position="156"/>
    </location>
    <ligand>
        <name>substrate</name>
    </ligand>
</feature>
<feature type="binding site" evidence="2">
    <location>
        <position position="157"/>
    </location>
    <ligand>
        <name>Fe cation</name>
        <dbReference type="ChEBI" id="CHEBI:24875"/>
        <label>1</label>
    </ligand>
</feature>
<feature type="binding site" evidence="2">
    <location>
        <position position="160"/>
    </location>
    <ligand>
        <name>Fe cation</name>
        <dbReference type="ChEBI" id="CHEBI:24875"/>
        <label>2</label>
    </ligand>
</feature>
<feature type="binding site" evidence="2">
    <location>
        <position position="161"/>
    </location>
    <ligand>
        <name>Fe cation</name>
        <dbReference type="ChEBI" id="CHEBI:24875"/>
        <label>1</label>
    </ligand>
</feature>
<feature type="binding site" evidence="1">
    <location>
        <position position="188"/>
    </location>
    <ligand>
        <name>substrate</name>
    </ligand>
</feature>
<feature type="binding site" evidence="1">
    <location>
        <position position="189"/>
    </location>
    <ligand>
        <name>substrate</name>
    </ligand>
</feature>
<feature type="binding site" evidence="1">
    <location>
        <position position="262"/>
    </location>
    <ligand>
        <name>substrate</name>
    </ligand>
</feature>
<feature type="binding site" evidence="2">
    <location>
        <position position="269"/>
    </location>
    <ligand>
        <name>Fe cation</name>
        <dbReference type="ChEBI" id="CHEBI:24875"/>
        <label>2</label>
    </ligand>
</feature>
<feature type="binding site" evidence="2">
    <location>
        <position position="298"/>
    </location>
    <ligand>
        <name>Fe cation</name>
        <dbReference type="ChEBI" id="CHEBI:24875"/>
        <label>2</label>
    </ligand>
</feature>
<feature type="binding site" evidence="2">
    <location>
        <position position="301"/>
    </location>
    <ligand>
        <name>Fe cation</name>
        <dbReference type="ChEBI" id="CHEBI:24875"/>
        <label>1</label>
    </ligand>
</feature>
<feature type="binding site" evidence="2">
    <location>
        <position position="302"/>
    </location>
    <ligand>
        <name>Fe cation</name>
        <dbReference type="ChEBI" id="CHEBI:24875"/>
        <label>2</label>
    </ligand>
</feature>
<feature type="modified residue" description="Phosphoserine" evidence="1">
    <location>
        <position position="203"/>
    </location>
</feature>
<name>ACOD_SHEEP</name>
<comment type="function">
    <text evidence="1 2">Stearoyl-CoA desaturase that utilizes O(2) and electrons from reduced cytochrome b5 to introduce the first double bond into saturated fatty acyl-CoA substrates. Catalyzes the insertion of a cis double bond at the delta-9 position into fatty acyl-CoA substrates including palmitoyl-CoA and stearoyl-CoA (By similarity). Gives rise to a mixture of 16:1 and 18:1 unsaturated fatty acids. Plays an important role in lipid biosynthesis. Plays an important role in regulating the expression of genes that are involved in lipogenesis and in regulating mitochondrial fatty acid oxidation (By similarity). Plays an important role in body energy homeostasis (By similarity). Contributes to the biosynthesis of membrane phospholipids, cholesterol esters and triglycerides (By similarity).</text>
</comment>
<comment type="catalytic activity">
    <reaction evidence="2">
        <text>octadecanoyl-CoA + 2 Fe(II)-[cytochrome b5] + O2 + 2 H(+) = (9Z)-octadecenoyl-CoA + 2 Fe(III)-[cytochrome b5] + 2 H2O</text>
        <dbReference type="Rhea" id="RHEA:19721"/>
        <dbReference type="Rhea" id="RHEA-COMP:10438"/>
        <dbReference type="Rhea" id="RHEA-COMP:10439"/>
        <dbReference type="ChEBI" id="CHEBI:15377"/>
        <dbReference type="ChEBI" id="CHEBI:15378"/>
        <dbReference type="ChEBI" id="CHEBI:15379"/>
        <dbReference type="ChEBI" id="CHEBI:29033"/>
        <dbReference type="ChEBI" id="CHEBI:29034"/>
        <dbReference type="ChEBI" id="CHEBI:57387"/>
        <dbReference type="ChEBI" id="CHEBI:57394"/>
        <dbReference type="EC" id="1.14.19.1"/>
    </reaction>
</comment>
<comment type="cofactor">
    <cofactor evidence="2">
        <name>Fe(2+)</name>
        <dbReference type="ChEBI" id="CHEBI:29033"/>
    </cofactor>
    <text evidence="2">Expected to bind 2 Fe(2+) ions per subunit.</text>
</comment>
<comment type="subcellular location">
    <subcellularLocation>
        <location evidence="2">Endoplasmic reticulum membrane</location>
        <topology evidence="4">Multi-pass membrane protein</topology>
    </subcellularLocation>
</comment>
<comment type="domain">
    <text evidence="1">The histidine box domains are involved in binding the catalytic metal ions.</text>
</comment>
<comment type="similarity">
    <text evidence="4">Belongs to the fatty acid desaturase type 1 family.</text>
</comment>
<evidence type="ECO:0000250" key="1">
    <source>
        <dbReference type="UniProtKB" id="O00767"/>
    </source>
</evidence>
<evidence type="ECO:0000250" key="2">
    <source>
        <dbReference type="UniProtKB" id="P13516"/>
    </source>
</evidence>
<evidence type="ECO:0000303" key="3">
    <source>
    </source>
</evidence>
<evidence type="ECO:0000305" key="4"/>
<accession>O62849</accession>
<protein>
    <recommendedName>
        <fullName>Acyl-CoA desaturase</fullName>
        <ecNumber evidence="2">1.14.19.1</ecNumber>
    </recommendedName>
    <alternativeName>
        <fullName>Delta(9)-desaturase</fullName>
        <shortName>Delta-9 desaturase</shortName>
    </alternativeName>
    <alternativeName>
        <fullName>Fatty acid desaturase</fullName>
    </alternativeName>
    <alternativeName>
        <fullName evidence="3">Stearoyl-CoA desaturase</fullName>
    </alternativeName>
</protein>